<evidence type="ECO:0000255" key="1">
    <source>
        <dbReference type="HAMAP-Rule" id="MF_00600"/>
    </source>
</evidence>
<comment type="function">
    <text evidence="1">Together with its co-chaperonin GroES, plays an essential role in assisting protein folding. The GroEL-GroES system forms a nano-cage that allows encapsulation of the non-native substrate proteins and provides a physical environment optimized to promote and accelerate protein folding.</text>
</comment>
<comment type="catalytic activity">
    <reaction evidence="1">
        <text>ATP + H2O + a folded polypeptide = ADP + phosphate + an unfolded polypeptide.</text>
        <dbReference type="EC" id="5.6.1.7"/>
    </reaction>
</comment>
<comment type="subunit">
    <text evidence="1">Forms a cylinder of 14 subunits composed of two heptameric rings stacked back-to-back. Interacts with the co-chaperonin GroES.</text>
</comment>
<comment type="subcellular location">
    <subcellularLocation>
        <location evidence="1">Cytoplasm</location>
    </subcellularLocation>
</comment>
<comment type="similarity">
    <text evidence="1">Belongs to the chaperonin (HSP60) family.</text>
</comment>
<keyword id="KW-0067">ATP-binding</keyword>
<keyword id="KW-0143">Chaperone</keyword>
<keyword id="KW-0963">Cytoplasm</keyword>
<keyword id="KW-0413">Isomerase</keyword>
<keyword id="KW-0547">Nucleotide-binding</keyword>
<gene>
    <name evidence="1" type="primary">groEL</name>
    <name evidence="1" type="synonym">groL</name>
    <name type="ordered locus">AB57_3079</name>
</gene>
<name>CH60_ACIB5</name>
<reference key="1">
    <citation type="journal article" date="2008" name="J. Bacteriol.">
        <title>Comparative genome sequence analysis of multidrug-resistant Acinetobacter baumannii.</title>
        <authorList>
            <person name="Adams M.D."/>
            <person name="Goglin K."/>
            <person name="Molyneaux N."/>
            <person name="Hujer K.M."/>
            <person name="Lavender H."/>
            <person name="Jamison J.J."/>
            <person name="MacDonald I.J."/>
            <person name="Martin K.M."/>
            <person name="Russo T."/>
            <person name="Campagnari A.A."/>
            <person name="Hujer A.M."/>
            <person name="Bonomo R.A."/>
            <person name="Gill S.R."/>
        </authorList>
    </citation>
    <scope>NUCLEOTIDE SEQUENCE [LARGE SCALE GENOMIC DNA]</scope>
    <source>
        <strain>AB0057</strain>
    </source>
</reference>
<protein>
    <recommendedName>
        <fullName evidence="1">Chaperonin GroEL</fullName>
        <ecNumber evidence="1">5.6.1.7</ecNumber>
    </recommendedName>
    <alternativeName>
        <fullName evidence="1">60 kDa chaperonin</fullName>
    </alternativeName>
    <alternativeName>
        <fullName evidence="1">Chaperonin-60</fullName>
        <shortName evidence="1">Cpn60</shortName>
    </alternativeName>
</protein>
<organism>
    <name type="scientific">Acinetobacter baumannii (strain AB0057)</name>
    <dbReference type="NCBI Taxonomy" id="480119"/>
    <lineage>
        <taxon>Bacteria</taxon>
        <taxon>Pseudomonadati</taxon>
        <taxon>Pseudomonadota</taxon>
        <taxon>Gammaproteobacteria</taxon>
        <taxon>Moraxellales</taxon>
        <taxon>Moraxellaceae</taxon>
        <taxon>Acinetobacter</taxon>
        <taxon>Acinetobacter calcoaceticus/baumannii complex</taxon>
    </lineage>
</organism>
<dbReference type="EC" id="5.6.1.7" evidence="1"/>
<dbReference type="EMBL" id="CP001182">
    <property type="protein sequence ID" value="ACJ42411.1"/>
    <property type="molecule type" value="Genomic_DNA"/>
</dbReference>
<dbReference type="RefSeq" id="WP_001274623.1">
    <property type="nucleotide sequence ID" value="NC_011586.2"/>
</dbReference>
<dbReference type="SMR" id="B7I618"/>
<dbReference type="GeneID" id="92894939"/>
<dbReference type="KEGG" id="abn:AB57_06545"/>
<dbReference type="HOGENOM" id="CLU_016503_3_0_6"/>
<dbReference type="Proteomes" id="UP000007094">
    <property type="component" value="Chromosome"/>
</dbReference>
<dbReference type="GO" id="GO:0005737">
    <property type="term" value="C:cytoplasm"/>
    <property type="evidence" value="ECO:0007669"/>
    <property type="project" value="UniProtKB-SubCell"/>
</dbReference>
<dbReference type="GO" id="GO:0005524">
    <property type="term" value="F:ATP binding"/>
    <property type="evidence" value="ECO:0007669"/>
    <property type="project" value="UniProtKB-UniRule"/>
</dbReference>
<dbReference type="GO" id="GO:0140662">
    <property type="term" value="F:ATP-dependent protein folding chaperone"/>
    <property type="evidence" value="ECO:0007669"/>
    <property type="project" value="InterPro"/>
</dbReference>
<dbReference type="GO" id="GO:0016853">
    <property type="term" value="F:isomerase activity"/>
    <property type="evidence" value="ECO:0007669"/>
    <property type="project" value="UniProtKB-KW"/>
</dbReference>
<dbReference type="GO" id="GO:0051082">
    <property type="term" value="F:unfolded protein binding"/>
    <property type="evidence" value="ECO:0007669"/>
    <property type="project" value="UniProtKB-UniRule"/>
</dbReference>
<dbReference type="GO" id="GO:0042026">
    <property type="term" value="P:protein refolding"/>
    <property type="evidence" value="ECO:0007669"/>
    <property type="project" value="UniProtKB-UniRule"/>
</dbReference>
<dbReference type="CDD" id="cd03344">
    <property type="entry name" value="GroEL"/>
    <property type="match status" value="1"/>
</dbReference>
<dbReference type="FunFam" id="1.10.560.10:FF:000001">
    <property type="entry name" value="60 kDa chaperonin"/>
    <property type="match status" value="1"/>
</dbReference>
<dbReference type="FunFam" id="3.50.7.10:FF:000001">
    <property type="entry name" value="60 kDa chaperonin"/>
    <property type="match status" value="1"/>
</dbReference>
<dbReference type="Gene3D" id="3.50.7.10">
    <property type="entry name" value="GroEL"/>
    <property type="match status" value="1"/>
</dbReference>
<dbReference type="Gene3D" id="1.10.560.10">
    <property type="entry name" value="GroEL-like equatorial domain"/>
    <property type="match status" value="1"/>
</dbReference>
<dbReference type="Gene3D" id="3.30.260.10">
    <property type="entry name" value="TCP-1-like chaperonin intermediate domain"/>
    <property type="match status" value="1"/>
</dbReference>
<dbReference type="HAMAP" id="MF_00600">
    <property type="entry name" value="CH60"/>
    <property type="match status" value="1"/>
</dbReference>
<dbReference type="InterPro" id="IPR018370">
    <property type="entry name" value="Chaperonin_Cpn60_CS"/>
</dbReference>
<dbReference type="InterPro" id="IPR001844">
    <property type="entry name" value="Cpn60/GroEL"/>
</dbReference>
<dbReference type="InterPro" id="IPR002423">
    <property type="entry name" value="Cpn60/GroEL/TCP-1"/>
</dbReference>
<dbReference type="InterPro" id="IPR027409">
    <property type="entry name" value="GroEL-like_apical_dom_sf"/>
</dbReference>
<dbReference type="InterPro" id="IPR027413">
    <property type="entry name" value="GROEL-like_equatorial_sf"/>
</dbReference>
<dbReference type="InterPro" id="IPR027410">
    <property type="entry name" value="TCP-1-like_intermed_sf"/>
</dbReference>
<dbReference type="NCBIfam" id="TIGR02348">
    <property type="entry name" value="GroEL"/>
    <property type="match status" value="1"/>
</dbReference>
<dbReference type="NCBIfam" id="NF000592">
    <property type="entry name" value="PRK00013.1"/>
    <property type="match status" value="1"/>
</dbReference>
<dbReference type="NCBIfam" id="NF009487">
    <property type="entry name" value="PRK12849.1"/>
    <property type="match status" value="1"/>
</dbReference>
<dbReference type="NCBIfam" id="NF009488">
    <property type="entry name" value="PRK12850.1"/>
    <property type="match status" value="1"/>
</dbReference>
<dbReference type="NCBIfam" id="NF009489">
    <property type="entry name" value="PRK12851.1"/>
    <property type="match status" value="1"/>
</dbReference>
<dbReference type="PANTHER" id="PTHR45633">
    <property type="entry name" value="60 KDA HEAT SHOCK PROTEIN, MITOCHONDRIAL"/>
    <property type="match status" value="1"/>
</dbReference>
<dbReference type="Pfam" id="PF00118">
    <property type="entry name" value="Cpn60_TCP1"/>
    <property type="match status" value="1"/>
</dbReference>
<dbReference type="PRINTS" id="PR00298">
    <property type="entry name" value="CHAPERONIN60"/>
</dbReference>
<dbReference type="SUPFAM" id="SSF52029">
    <property type="entry name" value="GroEL apical domain-like"/>
    <property type="match status" value="1"/>
</dbReference>
<dbReference type="SUPFAM" id="SSF48592">
    <property type="entry name" value="GroEL equatorial domain-like"/>
    <property type="match status" value="1"/>
</dbReference>
<dbReference type="SUPFAM" id="SSF54849">
    <property type="entry name" value="GroEL-intermediate domain like"/>
    <property type="match status" value="1"/>
</dbReference>
<dbReference type="PROSITE" id="PS00296">
    <property type="entry name" value="CHAPERONINS_CPN60"/>
    <property type="match status" value="1"/>
</dbReference>
<accession>B7I618</accession>
<feature type="chain" id="PRO_1000129957" description="Chaperonin GroEL">
    <location>
        <begin position="1"/>
        <end position="544"/>
    </location>
</feature>
<feature type="binding site" evidence="1">
    <location>
        <begin position="30"/>
        <end position="33"/>
    </location>
    <ligand>
        <name>ATP</name>
        <dbReference type="ChEBI" id="CHEBI:30616"/>
    </ligand>
</feature>
<feature type="binding site" evidence="1">
    <location>
        <position position="51"/>
    </location>
    <ligand>
        <name>ATP</name>
        <dbReference type="ChEBI" id="CHEBI:30616"/>
    </ligand>
</feature>
<feature type="binding site" evidence="1">
    <location>
        <begin position="87"/>
        <end position="91"/>
    </location>
    <ligand>
        <name>ATP</name>
        <dbReference type="ChEBI" id="CHEBI:30616"/>
    </ligand>
</feature>
<feature type="binding site" evidence="1">
    <location>
        <position position="415"/>
    </location>
    <ligand>
        <name>ATP</name>
        <dbReference type="ChEBI" id="CHEBI:30616"/>
    </ligand>
</feature>
<feature type="binding site" evidence="1">
    <location>
        <begin position="479"/>
        <end position="481"/>
    </location>
    <ligand>
        <name>ATP</name>
        <dbReference type="ChEBI" id="CHEBI:30616"/>
    </ligand>
</feature>
<feature type="binding site" evidence="1">
    <location>
        <position position="495"/>
    </location>
    <ligand>
        <name>ATP</name>
        <dbReference type="ChEBI" id="CHEBI:30616"/>
    </ligand>
</feature>
<proteinExistence type="inferred from homology"/>
<sequence length="544" mass="57166">MSAKDVKFGDSARSKMIAGVNVLADAVKVTLGPKGRNVVIDRSFGAPHITKDGVTVAKEISLKDKFENMGAQLVREVSSKTNDIAGDGTTTATVLAQAILNEGIKSVTAGMNPMDLKRGIDIAVKTVVENIRSIAKPADDFKAIEQVGSISANSDTTVGKLIAQAMEKVGKEGVITVEEGSGFEDALDVVEGMQFDRGYISPYFANKQDTLTAELENPFILLVDKKISNIRELISVLEAVAKTGKPLLIIAEDVEGEALATLVVNNMRGIIKVCAVKAPGFGDRRKAMLQDIAILTGATVISEEVGMSLEQATLQDLGTAHKITVSKENTVIVDGAGDAAAIAERVQQIRAQIEESTSEYDREKLQERVAKLAGGVAVIKIGAATEVEMKEKKDRVDDALHATRAAVEEGVVAGGGVALVRAVNALEGLKGANEDQTAGINILRRAIEAPLRQIVANAGDEPSVVINAVKNGEGNFGYNAATGEYGDMLEMGILDPAKVTRSALEHAASVAGLMLTTECMITDIPEDKPAAPDMGGMGGMGGMM</sequence>